<sequence>MVTQNKKILIITGSFGNGHMQVTQSIVNQLNDMNLDHLSVIEHDLFMEAHPILTSICKKWYINSFKYFRNMYKGFYYSRPDKLDKCFYKYYGLNKLINLLIKEKPDLILLTFPTPVMSVLTEQFNINIPVATVMTDYRLHKNWITPYSTRYYVATKETKQDFIDVGIDPSTVKVTGIPIDNKFETPINQKQWLIDNNLDPDKQTILMSAGAFGVSKGFDTMITDILAKSANAQVVMICGKSKELKRSLIAKFKSNENVLILGYTKHMNEWMASSQLMITKPGGITITEGFARCIPMIFLNPAPGQELENALYFEEKGFGKIADTPEEAIKIVASLTNGNEQLTNMISTMEQDKIKYATQTICRDLLDLIGHSSQPQEIYGKVPLYARFFVK</sequence>
<organism>
    <name type="scientific">Staphylococcus aureus (strain N315)</name>
    <dbReference type="NCBI Taxonomy" id="158879"/>
    <lineage>
        <taxon>Bacteria</taxon>
        <taxon>Bacillati</taxon>
        <taxon>Bacillota</taxon>
        <taxon>Bacilli</taxon>
        <taxon>Bacillales</taxon>
        <taxon>Staphylococcaceae</taxon>
        <taxon>Staphylococcus</taxon>
    </lineage>
</organism>
<accession>Q7A6D2</accession>
<proteinExistence type="inferred from homology"/>
<keyword id="KW-0119">Carbohydrate metabolism</keyword>
<keyword id="KW-1003">Cell membrane</keyword>
<keyword id="KW-0328">Glycosyltransferase</keyword>
<keyword id="KW-0444">Lipid biosynthesis</keyword>
<keyword id="KW-0443">Lipid metabolism</keyword>
<keyword id="KW-0472">Membrane</keyword>
<keyword id="KW-0808">Transferase</keyword>
<name>UGTP_STAAN</name>
<reference key="1">
    <citation type="journal article" date="2001" name="Lancet">
        <title>Whole genome sequencing of meticillin-resistant Staphylococcus aureus.</title>
        <authorList>
            <person name="Kuroda M."/>
            <person name="Ohta T."/>
            <person name="Uchiyama I."/>
            <person name="Baba T."/>
            <person name="Yuzawa H."/>
            <person name="Kobayashi I."/>
            <person name="Cui L."/>
            <person name="Oguchi A."/>
            <person name="Aoki K."/>
            <person name="Nagai Y."/>
            <person name="Lian J.-Q."/>
            <person name="Ito T."/>
            <person name="Kanamori M."/>
            <person name="Matsumaru H."/>
            <person name="Maruyama A."/>
            <person name="Murakami H."/>
            <person name="Hosoyama A."/>
            <person name="Mizutani-Ui Y."/>
            <person name="Takahashi N.K."/>
            <person name="Sawano T."/>
            <person name="Inoue R."/>
            <person name="Kaito C."/>
            <person name="Sekimizu K."/>
            <person name="Hirakawa H."/>
            <person name="Kuhara S."/>
            <person name="Goto S."/>
            <person name="Yabuzaki J."/>
            <person name="Kanehisa M."/>
            <person name="Yamashita A."/>
            <person name="Oshima K."/>
            <person name="Furuya K."/>
            <person name="Yoshino C."/>
            <person name="Shiba T."/>
            <person name="Hattori M."/>
            <person name="Ogasawara N."/>
            <person name="Hayashi H."/>
            <person name="Hiramatsu K."/>
        </authorList>
    </citation>
    <scope>NUCLEOTIDE SEQUENCE [LARGE SCALE GENOMIC DNA]</scope>
    <source>
        <strain>N315</strain>
    </source>
</reference>
<comment type="function">
    <text evidence="1">Processive glucosyltransferase involved in the biosynthesis of both the bilayer- and non-bilayer-forming membrane glucolipids. Is able to successively transfer two glucosyl residues to diacylglycerol (DAG), thereby catalyzing the formation of beta-monoglucosyl-DAG (3-O-(beta-D-glucopyranosyl)-1,2-diacyl-sn-glycerol) and beta-diglucosyl-DAG (3-O-(beta-D-glucopyranosyl-beta-(1-&gt;6)-D-glucopyranosyl)-1,2-diacyl-sn-glycerol). Beta-diglucosyl-DAG is the predominant glycolipid found in Bacillales and is also used as a membrane anchor for lipoteichoic acid (LTA).</text>
</comment>
<comment type="catalytic activity">
    <reaction>
        <text>a 1,2-diacyl-3-O-(beta-D-glucopyranosyl)-sn-glycerol + UDP-alpha-D-glucose = a 1,2-diacyl-3-O-(beta-D-Glc-(1-&gt;6)-beta-D-Glc)-sn-glycerol + UDP + H(+)</text>
        <dbReference type="Rhea" id="RHEA:39031"/>
        <dbReference type="ChEBI" id="CHEBI:15378"/>
        <dbReference type="ChEBI" id="CHEBI:58223"/>
        <dbReference type="ChEBI" id="CHEBI:58885"/>
        <dbReference type="ChEBI" id="CHEBI:75799"/>
        <dbReference type="ChEBI" id="CHEBI:76264"/>
        <dbReference type="EC" id="2.4.1.315"/>
    </reaction>
</comment>
<comment type="catalytic activity">
    <reaction evidence="1">
        <text>a 1,2-diacyl-sn-glycerol + UDP-alpha-D-glucose = a 1,2-diacyl-3-O-(beta-D-glucopyranosyl)-sn-glycerol + UDP + H(+)</text>
        <dbReference type="Rhea" id="RHEA:17285"/>
        <dbReference type="ChEBI" id="CHEBI:15378"/>
        <dbReference type="ChEBI" id="CHEBI:17815"/>
        <dbReference type="ChEBI" id="CHEBI:58223"/>
        <dbReference type="ChEBI" id="CHEBI:58885"/>
        <dbReference type="ChEBI" id="CHEBI:75799"/>
    </reaction>
</comment>
<comment type="pathway">
    <text evidence="1">Glycolipid metabolism; diglucosyl-diacylglycerol biosynthesis.</text>
</comment>
<comment type="subcellular location">
    <subcellularLocation>
        <location evidence="1">Cell membrane</location>
    </subcellularLocation>
</comment>
<comment type="similarity">
    <text evidence="1">Belongs to the glycosyltransferase 28 family. UgtP subfamily.</text>
</comment>
<feature type="chain" id="PRO_0000308456" description="Processive diacylglycerol beta-glucosyltransferase">
    <location>
        <begin position="1"/>
        <end position="391"/>
    </location>
</feature>
<dbReference type="EC" id="2.4.1.315"/>
<dbReference type="EMBL" id="BA000018">
    <property type="protein sequence ID" value="BAB42116.1"/>
    <property type="molecule type" value="Genomic_DNA"/>
</dbReference>
<dbReference type="PIR" id="A89870">
    <property type="entry name" value="A89870"/>
</dbReference>
<dbReference type="RefSeq" id="WP_000258645.1">
    <property type="nucleotide sequence ID" value="NC_002745.2"/>
</dbReference>
<dbReference type="SMR" id="Q7A6D2"/>
<dbReference type="CAZy" id="GT28">
    <property type="family name" value="Glycosyltransferase Family 28"/>
</dbReference>
<dbReference type="EnsemblBacteria" id="BAB42116">
    <property type="protein sequence ID" value="BAB42116"/>
    <property type="gene ID" value="BAB42116"/>
</dbReference>
<dbReference type="KEGG" id="sau:SA0875"/>
<dbReference type="HOGENOM" id="CLU_028367_0_1_9"/>
<dbReference type="UniPathway" id="UPA00894"/>
<dbReference type="GO" id="GO:0005886">
    <property type="term" value="C:plasma membrane"/>
    <property type="evidence" value="ECO:0007669"/>
    <property type="project" value="UniProtKB-SubCell"/>
</dbReference>
<dbReference type="GO" id="GO:0047228">
    <property type="term" value="F:1,2-diacylglycerol 3-glucosyltransferase activity"/>
    <property type="evidence" value="ECO:0007669"/>
    <property type="project" value="UniProtKB-UniRule"/>
</dbReference>
<dbReference type="GO" id="GO:0009246">
    <property type="term" value="P:enterobacterial common antigen biosynthetic process"/>
    <property type="evidence" value="ECO:0007669"/>
    <property type="project" value="UniProtKB-UniPathway"/>
</dbReference>
<dbReference type="GO" id="GO:0009247">
    <property type="term" value="P:glycolipid biosynthetic process"/>
    <property type="evidence" value="ECO:0007669"/>
    <property type="project" value="UniProtKB-UniRule"/>
</dbReference>
<dbReference type="GO" id="GO:0070395">
    <property type="term" value="P:lipoteichoic acid biosynthetic process"/>
    <property type="evidence" value="ECO:0007669"/>
    <property type="project" value="UniProtKB-UniRule"/>
</dbReference>
<dbReference type="CDD" id="cd17507">
    <property type="entry name" value="GT28_Beta-DGS-like"/>
    <property type="match status" value="1"/>
</dbReference>
<dbReference type="Gene3D" id="3.40.50.2000">
    <property type="entry name" value="Glycogen Phosphorylase B"/>
    <property type="match status" value="2"/>
</dbReference>
<dbReference type="HAMAP" id="MF_01280">
    <property type="entry name" value="Diacylglyc_glucosyltr"/>
    <property type="match status" value="1"/>
</dbReference>
<dbReference type="InterPro" id="IPR009695">
    <property type="entry name" value="Diacylglyc_glucosyltr_N"/>
</dbReference>
<dbReference type="InterPro" id="IPR007235">
    <property type="entry name" value="Glyco_trans_28_C"/>
</dbReference>
<dbReference type="InterPro" id="IPR050519">
    <property type="entry name" value="Glycosyltransf_28_UgtP"/>
</dbReference>
<dbReference type="InterPro" id="IPR023589">
    <property type="entry name" value="Pro_diacylglycrl_glcsylTrfase"/>
</dbReference>
<dbReference type="NCBIfam" id="NF010134">
    <property type="entry name" value="PRK13608.1"/>
    <property type="match status" value="1"/>
</dbReference>
<dbReference type="PANTHER" id="PTHR43025">
    <property type="entry name" value="MONOGALACTOSYLDIACYLGLYCEROL SYNTHASE"/>
    <property type="match status" value="1"/>
</dbReference>
<dbReference type="PANTHER" id="PTHR43025:SF3">
    <property type="entry name" value="MONOGALACTOSYLDIACYLGLYCEROL SYNTHASE 1, CHLOROPLASTIC"/>
    <property type="match status" value="1"/>
</dbReference>
<dbReference type="Pfam" id="PF04101">
    <property type="entry name" value="Glyco_tran_28_C"/>
    <property type="match status" value="1"/>
</dbReference>
<dbReference type="Pfam" id="PF06925">
    <property type="entry name" value="MGDG_synth"/>
    <property type="match status" value="1"/>
</dbReference>
<dbReference type="SUPFAM" id="SSF53756">
    <property type="entry name" value="UDP-Glycosyltransferase/glycogen phosphorylase"/>
    <property type="match status" value="1"/>
</dbReference>
<gene>
    <name evidence="1" type="primary">ugtP</name>
    <name type="ordered locus">SA0875</name>
</gene>
<protein>
    <recommendedName>
        <fullName evidence="1">Processive diacylglycerol beta-glucosyltransferase</fullName>
        <ecNumber>2.4.1.315</ecNumber>
    </recommendedName>
    <alternativeName>
        <fullName evidence="1">Beta-diglucosyldiacylglycerol synthase</fullName>
        <shortName evidence="1">Beta-DGS</shortName>
        <shortName evidence="1">DGlcDAG synthase</shortName>
        <shortName evidence="1">Glc2-DAG synthase</shortName>
    </alternativeName>
    <alternativeName>
        <fullName evidence="1">Beta-gentiobiosyldiacylglycerol synthase</fullName>
    </alternativeName>
    <alternativeName>
        <fullName evidence="1">Beta-monoglucosyldiacylglycerol synthase</fullName>
        <shortName evidence="1">Beta-MGS</shortName>
        <shortName evidence="1">MGlcDAG synthase</shortName>
    </alternativeName>
    <alternativeName>
        <fullName>Diglucosyl diacylglycerol synthase (1,6-linking)</fullName>
    </alternativeName>
    <alternativeName>
        <fullName evidence="1">Glucosyl-beta-1,6-glucosyldiacylglycerol synthase</fullName>
    </alternativeName>
    <alternativeName>
        <fullName evidence="1">UDP glucosyltransferase</fullName>
    </alternativeName>
    <alternativeName>
        <fullName evidence="1">UDP-glucose:1,2-diacylglycerol-3-beta-D-glucosyltransferase</fullName>
    </alternativeName>
</protein>
<evidence type="ECO:0000255" key="1">
    <source>
        <dbReference type="HAMAP-Rule" id="MF_01280"/>
    </source>
</evidence>